<geneLocation type="plasmid">
    <name>pTiA6</name>
</geneLocation>
<evidence type="ECO:0000255" key="1"/>
<evidence type="ECO:0000305" key="2"/>
<dbReference type="EMBL" id="J03216">
    <property type="status" value="NOT_ANNOTATED_CDS"/>
    <property type="molecule type" value="Genomic_DNA"/>
</dbReference>
<dbReference type="PIR" id="S00786">
    <property type="entry name" value="B0AG55"/>
</dbReference>
<dbReference type="SMR" id="P09783"/>
<dbReference type="IntAct" id="P09783">
    <property type="interactions" value="3"/>
</dbReference>
<dbReference type="GO" id="GO:0005886">
    <property type="term" value="C:plasma membrane"/>
    <property type="evidence" value="ECO:0007669"/>
    <property type="project" value="UniProtKB-SubCell"/>
</dbReference>
<dbReference type="CDD" id="cd16429">
    <property type="entry name" value="VirB10"/>
    <property type="match status" value="1"/>
</dbReference>
<dbReference type="Gene3D" id="2.40.128.260">
    <property type="entry name" value="Type IV secretion system, VirB10/TraB/TrbI"/>
    <property type="match status" value="1"/>
</dbReference>
<dbReference type="InterPro" id="IPR047695">
    <property type="entry name" value="T4SS_VirB10/PtlG"/>
</dbReference>
<dbReference type="InterPro" id="IPR005498">
    <property type="entry name" value="T4SS_VirB10/TraB/TrbI"/>
</dbReference>
<dbReference type="InterPro" id="IPR042217">
    <property type="entry name" value="T4SS_VirB10/TrbI"/>
</dbReference>
<dbReference type="NCBIfam" id="NF010429">
    <property type="entry name" value="PRK13855.1"/>
    <property type="match status" value="1"/>
</dbReference>
<dbReference type="NCBIfam" id="NF038091">
    <property type="entry name" value="T4SS_VirB10"/>
    <property type="match status" value="1"/>
</dbReference>
<dbReference type="Pfam" id="PF03743">
    <property type="entry name" value="TrbI"/>
    <property type="match status" value="1"/>
</dbReference>
<sequence length="376" mass="40690">MNNDSQQAAHEVDASGSLVSDKHRRRLSGSQKLIVGGVVLALSLSLIWLGGRQKKVNDNASPSTLIAANTKPFHPAPIEVPPDTPAVQEAVQPTVPQPPRGEPERMSHGRKKHRFLHIAVAIKGSASAPVRATWAEDKKTSVTTTPCRMRSVRRERFVDTYETHRAAAQQGTLLPHPDFMVTQGTIIPCILQTAIDTNLAGYVKCVLPQDIRGTTNNIVLLDRGTTVVGEIQRGLQQGDERVFVLWDRAETPDHAMISLTSPSADELGRPGLPGSVDSHFWQRFSGAMLLSAVQGAFQAASTYAGSSGGGMSFNSFQNNGEQTTETALKATINIPPTLKKNQGDTVSIFVARDLDFFGVYQLRLTGGAARGRNRRS</sequence>
<name>VIRBA_RHIRD</name>
<protein>
    <recommendedName>
        <fullName>Protein virB10</fullName>
    </recommendedName>
</protein>
<proteinExistence type="inferred from homology"/>
<comment type="function">
    <text>VirB proteins are suggested to act at the bacterial surface and there play an important role in directing T-DNA transfer to plant cells.</text>
</comment>
<comment type="subcellular location">
    <subcellularLocation>
        <location evidence="2">Cell inner membrane</location>
        <topology evidence="2">Single-pass membrane protein</topology>
    </subcellularLocation>
</comment>
<comment type="similarity">
    <text evidence="2">Belongs to the TrbI/VirB10 family.</text>
</comment>
<accession>P09783</accession>
<reference key="1">
    <citation type="journal article" date="1988" name="J. Biol. Chem.">
        <title>Characterization of the virB operon from an Agrobacterium tumefaciens Ti plasmid.</title>
        <authorList>
            <person name="Ward J.E."/>
            <person name="Akiyoshi D.E."/>
            <person name="Regier D."/>
            <person name="Datta A."/>
            <person name="Gordon M.P."/>
            <person name="Nester E.W."/>
        </authorList>
    </citation>
    <scope>NUCLEOTIDE SEQUENCE [GENOMIC DNA]</scope>
</reference>
<reference key="2">
    <citation type="journal article" date="1990" name="J. Biol. Chem.">
        <authorList>
            <person name="Ward J.E."/>
            <person name="Akiyoshi D.E."/>
            <person name="Regier D."/>
            <person name="Datta A."/>
            <person name="Gordon M.P."/>
            <person name="Nester E.W."/>
        </authorList>
    </citation>
    <scope>ERRATUM OF PUBMED:3281947</scope>
    <scope>SEQUENCE REVISION</scope>
</reference>
<keyword id="KW-0997">Cell inner membrane</keyword>
<keyword id="KW-1003">Cell membrane</keyword>
<keyword id="KW-0192">Crown gall tumor</keyword>
<keyword id="KW-0472">Membrane</keyword>
<keyword id="KW-0614">Plasmid</keyword>
<keyword id="KW-0812">Transmembrane</keyword>
<keyword id="KW-1133">Transmembrane helix</keyword>
<gene>
    <name type="primary">virB10</name>
</gene>
<feature type="chain" id="PRO_0000065848" description="Protein virB10">
    <location>
        <begin position="1"/>
        <end position="376"/>
    </location>
</feature>
<feature type="transmembrane region" description="Helical" evidence="1">
    <location>
        <begin position="33"/>
        <end position="50"/>
    </location>
</feature>
<organism>
    <name type="scientific">Rhizobium radiobacter</name>
    <name type="common">Agrobacterium tumefaciens</name>
    <name type="synonym">Agrobacterium radiobacter</name>
    <dbReference type="NCBI Taxonomy" id="358"/>
    <lineage>
        <taxon>Bacteria</taxon>
        <taxon>Pseudomonadati</taxon>
        <taxon>Pseudomonadota</taxon>
        <taxon>Alphaproteobacteria</taxon>
        <taxon>Hyphomicrobiales</taxon>
        <taxon>Rhizobiaceae</taxon>
        <taxon>Rhizobium/Agrobacterium group</taxon>
        <taxon>Agrobacterium</taxon>
        <taxon>Agrobacterium tumefaciens complex</taxon>
    </lineage>
</organism>